<comment type="subcellular location">
    <subcellularLocation>
        <location evidence="2">Virion</location>
    </subcellularLocation>
</comment>
<comment type="similarity">
    <text evidence="2">Belongs to the orbivirus VP6 family.</text>
</comment>
<organism>
    <name type="scientific">African horse sickness virus 3</name>
    <name type="common">AHSV-3</name>
    <dbReference type="NCBI Taxonomy" id="117204"/>
    <lineage>
        <taxon>Viruses</taxon>
        <taxon>Riboviria</taxon>
        <taxon>Orthornavirae</taxon>
        <taxon>Duplornaviricota</taxon>
        <taxon>Resentoviricetes</taxon>
        <taxon>Reovirales</taxon>
        <taxon>Sedoreoviridae</taxon>
        <taxon>Orbivirus</taxon>
        <taxon>African horse sickness virus</taxon>
    </lineage>
</organism>
<dbReference type="EMBL" id="U19881">
    <property type="protein sequence ID" value="AAB17103.1"/>
    <property type="molecule type" value="Genomic_RNA"/>
</dbReference>
<dbReference type="SMR" id="Q64909"/>
<dbReference type="GO" id="GO:0039626">
    <property type="term" value="C:viral intermediate capsid"/>
    <property type="evidence" value="ECO:0007669"/>
    <property type="project" value="UniProtKB-KW"/>
</dbReference>
<dbReference type="GO" id="GO:0005198">
    <property type="term" value="F:structural molecule activity"/>
    <property type="evidence" value="ECO:0007669"/>
    <property type="project" value="InterPro"/>
</dbReference>
<dbReference type="InterPro" id="IPR001399">
    <property type="entry name" value="Orbi_VP6"/>
</dbReference>
<dbReference type="Pfam" id="PF01516">
    <property type="entry name" value="Orbi_VP6"/>
    <property type="match status" value="1"/>
</dbReference>
<reference key="1">
    <citation type="journal article" date="1996" name="J. Gen. Virol.">
        <title>Characterization of the gene encoding core protein VP6 of two African horsesickness virus serotypes.</title>
        <authorList>
            <person name="Turnbull P.J."/>
            <person name="Cormack S.B."/>
            <person name="Huismans H."/>
        </authorList>
    </citation>
    <scope>NUCLEOTIDE SEQUENCE [GENOMIC RNA]</scope>
</reference>
<proteinExistence type="inferred from homology"/>
<keyword id="KW-0167">Capsid protein</keyword>
<keyword id="KW-1154">Intermediate capsid protein</keyword>
<keyword id="KW-0946">Virion</keyword>
<feature type="chain" id="PRO_0000222727" description="Protein VP6">
    <location>
        <begin position="1"/>
        <end position="369"/>
    </location>
</feature>
<feature type="region of interest" description="Disordered" evidence="1">
    <location>
        <begin position="20"/>
        <end position="208"/>
    </location>
</feature>
<feature type="compositionally biased region" description="Basic and acidic residues" evidence="1">
    <location>
        <begin position="29"/>
        <end position="66"/>
    </location>
</feature>
<feature type="compositionally biased region" description="Gly residues" evidence="1">
    <location>
        <begin position="92"/>
        <end position="111"/>
    </location>
</feature>
<feature type="compositionally biased region" description="Gly residues" evidence="1">
    <location>
        <begin position="162"/>
        <end position="171"/>
    </location>
</feature>
<feature type="compositionally biased region" description="Basic and acidic residues" evidence="1">
    <location>
        <begin position="196"/>
        <end position="208"/>
    </location>
</feature>
<gene>
    <name type="primary">S9</name>
</gene>
<sequence length="369" mass="38464">MSSALLLAPGDLIEKAKRELEQRSIAPLLREKNSTEAKSKLKEDGEKKNKSEKEENKIHDDRRVESQESEGSGSADCQRGAGSRGADCATSTGGGDGGAGARTGIGGGGVGRVDSRSGGRGGQGAASDGKGVGKSKTGADRVANDGATRDVGTSEVSSSGITSGGLQGRGGLVAKSSECGGEPLDRTGGCSGNSKTEGEEAKVGGGDRRIGGLATQGIADFVKKKIGVEVQVFSKGMSNFFTVDKSLLKRGGLGREDILHQSDIVKEIRASDKKVKIIPLSTVKRMIAEFGGTEEDEIKAVQTQSSSIRYISNRMEDVSRAKAMFTAPTGDEGWKEVAKAATQRPNIMAYVHEGEGDGLKELLHLIDHI</sequence>
<evidence type="ECO:0000256" key="1">
    <source>
        <dbReference type="SAM" id="MobiDB-lite"/>
    </source>
</evidence>
<evidence type="ECO:0000305" key="2"/>
<protein>
    <recommendedName>
        <fullName>Protein VP6</fullName>
    </recommendedName>
    <alternativeName>
        <fullName>Minor inner core protein VP6</fullName>
    </alternativeName>
</protein>
<accession>Q64909</accession>
<name>VP6_AHSV3</name>
<organismHost>
    <name type="scientific">Anas</name>
    <name type="common">ducks</name>
    <dbReference type="NCBI Taxonomy" id="8835"/>
</organismHost>
<organismHost>
    <name type="scientific">Camelus dromedarius</name>
    <name type="common">Dromedary</name>
    <name type="synonym">Arabian camel</name>
    <dbReference type="NCBI Taxonomy" id="9838"/>
</organismHost>
<organismHost>
    <name type="scientific">Canis lupus familiaris</name>
    <name type="common">Dog</name>
    <name type="synonym">Canis familiaris</name>
    <dbReference type="NCBI Taxonomy" id="9615"/>
</organismHost>
<organismHost>
    <name type="scientific">Equus asinus</name>
    <name type="common">Donkey</name>
    <name type="synonym">Equus africanus asinus</name>
    <dbReference type="NCBI Taxonomy" id="9793"/>
</organismHost>
<organismHost>
    <name type="scientific">Equus caballus</name>
    <name type="common">Horse</name>
    <dbReference type="NCBI Taxonomy" id="9796"/>
</organismHost>
<organismHost>
    <name type="scientific">Equus hemionus</name>
    <name type="common">Onager</name>
    <name type="synonym">Asian wild ass</name>
    <dbReference type="NCBI Taxonomy" id="9794"/>
</organismHost>
<organismHost>
    <name type="scientific">Equus quagga burchellii</name>
    <name type="common">Burchell's zebra</name>
    <name type="synonym">Equus burchelli</name>
    <dbReference type="NCBI Taxonomy" id="89252"/>
</organismHost>
<organismHost>
    <name type="scientific">Loxodonta africana</name>
    <name type="common">African elephant</name>
    <dbReference type="NCBI Taxonomy" id="9785"/>
</organismHost>